<proteinExistence type="inferred from homology"/>
<accession>Q0CGP0</accession>
<name>PGLRX_ASPTN</name>
<reference key="1">
    <citation type="submission" date="2005-09" db="EMBL/GenBank/DDBJ databases">
        <title>Annotation of the Aspergillus terreus NIH2624 genome.</title>
        <authorList>
            <person name="Birren B.W."/>
            <person name="Lander E.S."/>
            <person name="Galagan J.E."/>
            <person name="Nusbaum C."/>
            <person name="Devon K."/>
            <person name="Henn M."/>
            <person name="Ma L.-J."/>
            <person name="Jaffe D.B."/>
            <person name="Butler J."/>
            <person name="Alvarez P."/>
            <person name="Gnerre S."/>
            <person name="Grabherr M."/>
            <person name="Kleber M."/>
            <person name="Mauceli E.W."/>
            <person name="Brockman W."/>
            <person name="Rounsley S."/>
            <person name="Young S.K."/>
            <person name="LaButti K."/>
            <person name="Pushparaj V."/>
            <person name="DeCaprio D."/>
            <person name="Crawford M."/>
            <person name="Koehrsen M."/>
            <person name="Engels R."/>
            <person name="Montgomery P."/>
            <person name="Pearson M."/>
            <person name="Howarth C."/>
            <person name="Larson L."/>
            <person name="Luoma S."/>
            <person name="White J."/>
            <person name="Alvarado L."/>
            <person name="Kodira C.D."/>
            <person name="Zeng Q."/>
            <person name="Oleary S."/>
            <person name="Yandava C."/>
            <person name="Denning D.W."/>
            <person name="Nierman W.C."/>
            <person name="Milne T."/>
            <person name="Madden K."/>
        </authorList>
    </citation>
    <scope>NUCLEOTIDE SEQUENCE [LARGE SCALE GENOMIC DNA]</scope>
    <source>
        <strain>NIH 2624 / FGSC A1156</strain>
    </source>
</reference>
<protein>
    <recommendedName>
        <fullName>Probable exopolygalacturonase X</fullName>
        <shortName>ExoPG</shortName>
        <ecNumber>3.2.1.67</ecNumber>
    </recommendedName>
    <alternativeName>
        <fullName>Galacturan 1,4-alpha-galacturonidase</fullName>
    </alternativeName>
    <alternativeName>
        <fullName>Poly(1,4-alpha-D-galacturonide)galacturonohydrolase</fullName>
    </alternativeName>
</protein>
<gene>
    <name type="primary">pgaX</name>
    <name type="ORF">ATEG_07152</name>
</gene>
<comment type="function">
    <text evidence="1">Specific in hydrolyzing the terminal glycosidic bond of polygalacturonic acid and oligogalacturonates.</text>
</comment>
<comment type="catalytic activity">
    <reaction>
        <text>[(1-&gt;4)-alpha-D-galacturonosyl](n) + H2O = alpha-D-galacturonate + [(1-&gt;4)-alpha-D-galacturonosyl](n-1)</text>
        <dbReference type="Rhea" id="RHEA:14117"/>
        <dbReference type="Rhea" id="RHEA-COMP:14570"/>
        <dbReference type="Rhea" id="RHEA-COMP:14572"/>
        <dbReference type="ChEBI" id="CHEBI:15377"/>
        <dbReference type="ChEBI" id="CHEBI:58658"/>
        <dbReference type="ChEBI" id="CHEBI:140523"/>
        <dbReference type="EC" id="3.2.1.67"/>
    </reaction>
</comment>
<comment type="subcellular location">
    <subcellularLocation>
        <location evidence="1">Secreted</location>
    </subcellularLocation>
</comment>
<comment type="similarity">
    <text evidence="5">Belongs to the glycosyl hydrolase 28 family.</text>
</comment>
<keyword id="KW-0961">Cell wall biogenesis/degradation</keyword>
<keyword id="KW-1015">Disulfide bond</keyword>
<keyword id="KW-0325">Glycoprotein</keyword>
<keyword id="KW-0326">Glycosidase</keyword>
<keyword id="KW-0378">Hydrolase</keyword>
<keyword id="KW-1185">Reference proteome</keyword>
<keyword id="KW-0677">Repeat</keyword>
<keyword id="KW-0964">Secreted</keyword>
<keyword id="KW-0732">Signal</keyword>
<feature type="signal peptide" evidence="2">
    <location>
        <begin position="1"/>
        <end position="23"/>
    </location>
</feature>
<feature type="chain" id="PRO_0000393670" description="Probable exopolygalacturonase X">
    <location>
        <begin position="24"/>
        <end position="434"/>
    </location>
</feature>
<feature type="repeat" description="PbH1 1">
    <location>
        <begin position="231"/>
        <end position="252"/>
    </location>
</feature>
<feature type="repeat" description="PbH1 2">
    <location>
        <begin position="254"/>
        <end position="274"/>
    </location>
</feature>
<feature type="repeat" description="PbH1 3">
    <location>
        <begin position="327"/>
        <end position="348"/>
    </location>
</feature>
<feature type="repeat" description="PbH1 4">
    <location>
        <begin position="362"/>
        <end position="394"/>
    </location>
</feature>
<feature type="region of interest" description="Disordered" evidence="4">
    <location>
        <begin position="35"/>
        <end position="54"/>
    </location>
</feature>
<feature type="active site" description="Proton donor" evidence="3">
    <location>
        <position position="245"/>
    </location>
</feature>
<feature type="active site" evidence="3">
    <location>
        <position position="268"/>
    </location>
</feature>
<feature type="glycosylation site" description="N-linked (GlcNAc...) asparagine" evidence="2">
    <location>
        <position position="113"/>
    </location>
</feature>
<feature type="glycosylation site" description="N-linked (GlcNAc...) asparagine" evidence="2">
    <location>
        <position position="129"/>
    </location>
</feature>
<feature type="glycosylation site" description="N-linked (GlcNAc...) asparagine" evidence="2">
    <location>
        <position position="199"/>
    </location>
</feature>
<feature type="glycosylation site" description="N-linked (GlcNAc...) asparagine" evidence="2">
    <location>
        <position position="253"/>
    </location>
</feature>
<feature type="glycosylation site" description="N-linked (GlcNAc...) asparagine" evidence="2">
    <location>
        <position position="265"/>
    </location>
</feature>
<feature type="glycosylation site" description="N-linked (GlcNAc...) asparagine" evidence="2">
    <location>
        <position position="292"/>
    </location>
</feature>
<feature type="glycosylation site" description="N-linked (GlcNAc...) asparagine" evidence="2">
    <location>
        <position position="297"/>
    </location>
</feature>
<feature type="glycosylation site" description="N-linked (GlcNAc...) asparagine" evidence="2">
    <location>
        <position position="329"/>
    </location>
</feature>
<feature type="glycosylation site" description="N-linked (GlcNAc...) asparagine" evidence="2">
    <location>
        <position position="354"/>
    </location>
</feature>
<feature type="glycosylation site" description="N-linked (GlcNAc...) asparagine" evidence="2">
    <location>
        <position position="364"/>
    </location>
</feature>
<feature type="glycosylation site" description="N-linked (GlcNAc...) asparagine" evidence="2">
    <location>
        <position position="407"/>
    </location>
</feature>
<feature type="glycosylation site" description="N-linked (GlcNAc...) asparagine" evidence="2">
    <location>
        <position position="430"/>
    </location>
</feature>
<feature type="disulfide bond" evidence="1">
    <location>
        <begin position="247"/>
        <end position="264"/>
    </location>
</feature>
<feature type="disulfide bond" evidence="1">
    <location>
        <begin position="392"/>
        <end position="398"/>
    </location>
</feature>
<organism>
    <name type="scientific">Aspergillus terreus (strain NIH 2624 / FGSC A1156)</name>
    <dbReference type="NCBI Taxonomy" id="341663"/>
    <lineage>
        <taxon>Eukaryota</taxon>
        <taxon>Fungi</taxon>
        <taxon>Dikarya</taxon>
        <taxon>Ascomycota</taxon>
        <taxon>Pezizomycotina</taxon>
        <taxon>Eurotiomycetes</taxon>
        <taxon>Eurotiomycetidae</taxon>
        <taxon>Eurotiales</taxon>
        <taxon>Aspergillaceae</taxon>
        <taxon>Aspergillus</taxon>
        <taxon>Aspergillus subgen. Circumdati</taxon>
    </lineage>
</organism>
<evidence type="ECO:0000250" key="1"/>
<evidence type="ECO:0000255" key="2"/>
<evidence type="ECO:0000255" key="3">
    <source>
        <dbReference type="PROSITE-ProRule" id="PRU10052"/>
    </source>
</evidence>
<evidence type="ECO:0000256" key="4">
    <source>
        <dbReference type="SAM" id="MobiDB-lite"/>
    </source>
</evidence>
<evidence type="ECO:0000305" key="5"/>
<sequence>MKFLHTVAQTATLLLSLGASVEGFNRARNDACKPHHPFRPLPASTPRTKTCHVRSHGDGTDDAAFVLSALRKCNNGGKVVFDADKEYTIGTALDMTFLRHVDLEILGRIQFTNDTDYWQAHAFRHGFQNATTFFQLGGTDVNVYGSGTLDGNGQVWYDLYAAEPLTLRPILLGVIGLHGGTIGPLKLRYSPQWYQLVANSTDVLFDGIDISGYSSSKNTAKNTDGWDTYRSSNIVIQNSVVNNGDDCVSFKPNSTDILVQNMHCNGSHGISVGSLGQYKGEIDIVKNILVYNISMYNASDMARIKVWPGVDSALSEDLQGGGGSGAVSNITYDRMYIENVDWAIEVTQCYGQKNQTLCNQYPSNLTISDVHIKNMWGTTSGKRDPNVGTIVCSSPDVCSDIYVTNVNVTSPSGTDDYICTNVDESLLDVNCSSG</sequence>
<dbReference type="EC" id="3.2.1.67"/>
<dbReference type="EMBL" id="CH476603">
    <property type="protein sequence ID" value="EAU32536.1"/>
    <property type="molecule type" value="Genomic_DNA"/>
</dbReference>
<dbReference type="RefSeq" id="XP_001209838.1">
    <property type="nucleotide sequence ID" value="XM_001209838.1"/>
</dbReference>
<dbReference type="SMR" id="Q0CGP0"/>
<dbReference type="STRING" id="341663.Q0CGP0"/>
<dbReference type="GlyCosmos" id="Q0CGP0">
    <property type="glycosylation" value="12 sites, No reported glycans"/>
</dbReference>
<dbReference type="EnsemblFungi" id="EAU32536">
    <property type="protein sequence ID" value="EAU32536"/>
    <property type="gene ID" value="ATEG_07152"/>
</dbReference>
<dbReference type="GeneID" id="4318820"/>
<dbReference type="VEuPathDB" id="FungiDB:ATEG_07152"/>
<dbReference type="eggNOG" id="ENOG502QPPR">
    <property type="taxonomic scope" value="Eukaryota"/>
</dbReference>
<dbReference type="HOGENOM" id="CLU_016031_1_0_1"/>
<dbReference type="OMA" id="YSPQWYT"/>
<dbReference type="OrthoDB" id="187139at2759"/>
<dbReference type="Proteomes" id="UP000007963">
    <property type="component" value="Unassembled WGS sequence"/>
</dbReference>
<dbReference type="GO" id="GO:0005576">
    <property type="term" value="C:extracellular region"/>
    <property type="evidence" value="ECO:0000250"/>
    <property type="project" value="UniProtKB"/>
</dbReference>
<dbReference type="GO" id="GO:0047911">
    <property type="term" value="F:galacturan 1,4-alpha-galacturonidase activity"/>
    <property type="evidence" value="ECO:0007669"/>
    <property type="project" value="UniProtKB-EC"/>
</dbReference>
<dbReference type="GO" id="GO:0004650">
    <property type="term" value="F:polygalacturonase activity"/>
    <property type="evidence" value="ECO:0000250"/>
    <property type="project" value="UniProtKB"/>
</dbReference>
<dbReference type="GO" id="GO:0071555">
    <property type="term" value="P:cell wall organization"/>
    <property type="evidence" value="ECO:0007669"/>
    <property type="project" value="UniProtKB-KW"/>
</dbReference>
<dbReference type="GO" id="GO:0045490">
    <property type="term" value="P:pectin catabolic process"/>
    <property type="evidence" value="ECO:0000250"/>
    <property type="project" value="UniProtKB"/>
</dbReference>
<dbReference type="FunFam" id="2.160.20.10:FF:000027">
    <property type="entry name" value="Probable exopolygalacturonase X"/>
    <property type="match status" value="1"/>
</dbReference>
<dbReference type="Gene3D" id="2.160.20.10">
    <property type="entry name" value="Single-stranded right-handed beta-helix, Pectin lyase-like"/>
    <property type="match status" value="1"/>
</dbReference>
<dbReference type="InterPro" id="IPR000743">
    <property type="entry name" value="Glyco_hydro_28"/>
</dbReference>
<dbReference type="InterPro" id="IPR012334">
    <property type="entry name" value="Pectin_lyas_fold"/>
</dbReference>
<dbReference type="InterPro" id="IPR011050">
    <property type="entry name" value="Pectin_lyase_fold/virulence"/>
</dbReference>
<dbReference type="PANTHER" id="PTHR31736">
    <property type="match status" value="1"/>
</dbReference>
<dbReference type="PANTHER" id="PTHR31736:SF14">
    <property type="entry name" value="EXOPOLYGALACTURONASE X-1-RELATED"/>
    <property type="match status" value="1"/>
</dbReference>
<dbReference type="Pfam" id="PF00295">
    <property type="entry name" value="Glyco_hydro_28"/>
    <property type="match status" value="1"/>
</dbReference>
<dbReference type="SUPFAM" id="SSF51126">
    <property type="entry name" value="Pectin lyase-like"/>
    <property type="match status" value="1"/>
</dbReference>
<dbReference type="PROSITE" id="PS00502">
    <property type="entry name" value="POLYGALACTURONASE"/>
    <property type="match status" value="1"/>
</dbReference>